<protein>
    <recommendedName>
        <fullName>Ribulose bisphosphate carboxylase large chain</fullName>
        <shortName>RuBisCO large subunit</shortName>
        <ecNumber>4.1.1.39</ecNumber>
    </recommendedName>
</protein>
<dbReference type="EC" id="4.1.1.39"/>
<dbReference type="EMBL" id="X83719">
    <property type="protein sequence ID" value="CAA58691.1"/>
    <property type="molecule type" value="Genomic_DNA"/>
</dbReference>
<dbReference type="SMR" id="Q33584"/>
<dbReference type="GO" id="GO:0009536">
    <property type="term" value="C:plastid"/>
    <property type="evidence" value="ECO:0007669"/>
    <property type="project" value="UniProtKB-SubCell"/>
</dbReference>
<dbReference type="GO" id="GO:0000287">
    <property type="term" value="F:magnesium ion binding"/>
    <property type="evidence" value="ECO:0007669"/>
    <property type="project" value="UniProtKB-UniRule"/>
</dbReference>
<dbReference type="GO" id="GO:0004497">
    <property type="term" value="F:monooxygenase activity"/>
    <property type="evidence" value="ECO:0007669"/>
    <property type="project" value="UniProtKB-KW"/>
</dbReference>
<dbReference type="GO" id="GO:0016984">
    <property type="term" value="F:ribulose-bisphosphate carboxylase activity"/>
    <property type="evidence" value="ECO:0007669"/>
    <property type="project" value="UniProtKB-UniRule"/>
</dbReference>
<dbReference type="GO" id="GO:0015977">
    <property type="term" value="P:carbon fixation"/>
    <property type="evidence" value="ECO:0007669"/>
    <property type="project" value="UniProtKB-UniRule"/>
</dbReference>
<dbReference type="GO" id="GO:0009853">
    <property type="term" value="P:photorespiration"/>
    <property type="evidence" value="ECO:0007669"/>
    <property type="project" value="UniProtKB-KW"/>
</dbReference>
<dbReference type="CDD" id="cd08212">
    <property type="entry name" value="RuBisCO_large_I"/>
    <property type="match status" value="1"/>
</dbReference>
<dbReference type="FunFam" id="3.20.20.110:FF:000001">
    <property type="entry name" value="Ribulose bisphosphate carboxylase large chain"/>
    <property type="match status" value="1"/>
</dbReference>
<dbReference type="FunFam" id="3.30.70.150:FF:000001">
    <property type="entry name" value="Ribulose bisphosphate carboxylase large chain"/>
    <property type="match status" value="1"/>
</dbReference>
<dbReference type="Gene3D" id="3.20.20.110">
    <property type="entry name" value="Ribulose bisphosphate carboxylase, large subunit, C-terminal domain"/>
    <property type="match status" value="1"/>
</dbReference>
<dbReference type="Gene3D" id="3.30.70.150">
    <property type="entry name" value="RuBisCO large subunit, N-terminal domain"/>
    <property type="match status" value="1"/>
</dbReference>
<dbReference type="HAMAP" id="MF_01338">
    <property type="entry name" value="RuBisCO_L_type1"/>
    <property type="match status" value="1"/>
</dbReference>
<dbReference type="InterPro" id="IPR033966">
    <property type="entry name" value="RuBisCO"/>
</dbReference>
<dbReference type="InterPro" id="IPR020878">
    <property type="entry name" value="RuBisCo_large_chain_AS"/>
</dbReference>
<dbReference type="InterPro" id="IPR000685">
    <property type="entry name" value="RuBisCO_lsu_C"/>
</dbReference>
<dbReference type="InterPro" id="IPR036376">
    <property type="entry name" value="RuBisCO_lsu_C_sf"/>
</dbReference>
<dbReference type="InterPro" id="IPR017443">
    <property type="entry name" value="RuBisCO_lsu_fd_N"/>
</dbReference>
<dbReference type="InterPro" id="IPR036422">
    <property type="entry name" value="RuBisCO_lsu_N_sf"/>
</dbReference>
<dbReference type="InterPro" id="IPR020888">
    <property type="entry name" value="RuBisCO_lsuI"/>
</dbReference>
<dbReference type="NCBIfam" id="NF003252">
    <property type="entry name" value="PRK04208.1"/>
    <property type="match status" value="1"/>
</dbReference>
<dbReference type="PANTHER" id="PTHR42704">
    <property type="entry name" value="RIBULOSE BISPHOSPHATE CARBOXYLASE"/>
    <property type="match status" value="1"/>
</dbReference>
<dbReference type="PANTHER" id="PTHR42704:SF16">
    <property type="entry name" value="RIBULOSE BISPHOSPHATE CARBOXYLASE LARGE CHAIN"/>
    <property type="match status" value="1"/>
</dbReference>
<dbReference type="Pfam" id="PF00016">
    <property type="entry name" value="RuBisCO_large"/>
    <property type="match status" value="1"/>
</dbReference>
<dbReference type="Pfam" id="PF02788">
    <property type="entry name" value="RuBisCO_large_N"/>
    <property type="match status" value="1"/>
</dbReference>
<dbReference type="SFLD" id="SFLDG01052">
    <property type="entry name" value="RuBisCO"/>
    <property type="match status" value="1"/>
</dbReference>
<dbReference type="SFLD" id="SFLDS00014">
    <property type="entry name" value="RuBisCO"/>
    <property type="match status" value="1"/>
</dbReference>
<dbReference type="SFLD" id="SFLDG00301">
    <property type="entry name" value="RuBisCO-like_proteins"/>
    <property type="match status" value="1"/>
</dbReference>
<dbReference type="SUPFAM" id="SSF51649">
    <property type="entry name" value="RuBisCo, C-terminal domain"/>
    <property type="match status" value="1"/>
</dbReference>
<dbReference type="SUPFAM" id="SSF54966">
    <property type="entry name" value="RuBisCO, large subunit, small (N-terminal) domain"/>
    <property type="match status" value="1"/>
</dbReference>
<dbReference type="PROSITE" id="PS00157">
    <property type="entry name" value="RUBISCO_LARGE"/>
    <property type="match status" value="1"/>
</dbReference>
<gene>
    <name type="primary">rbcL</name>
</gene>
<geneLocation type="non-photosynthetic plastid"/>
<accession>Q33584</accession>
<comment type="function">
    <text evidence="1">RuBisCO catalyzes two reactions: the carboxylation of D-ribulose 1,5-bisphosphate, the primary event in carbon dioxide fixation, as well as the oxidative fragmentation of the pentose substrate in the photorespiration process. Both reactions occur simultaneously and in competition at the same active site (By similarity).</text>
</comment>
<comment type="catalytic activity">
    <reaction>
        <text>2 (2R)-3-phosphoglycerate + 2 H(+) = D-ribulose 1,5-bisphosphate + CO2 + H2O</text>
        <dbReference type="Rhea" id="RHEA:23124"/>
        <dbReference type="ChEBI" id="CHEBI:15377"/>
        <dbReference type="ChEBI" id="CHEBI:15378"/>
        <dbReference type="ChEBI" id="CHEBI:16526"/>
        <dbReference type="ChEBI" id="CHEBI:57870"/>
        <dbReference type="ChEBI" id="CHEBI:58272"/>
        <dbReference type="EC" id="4.1.1.39"/>
    </reaction>
</comment>
<comment type="catalytic activity">
    <reaction>
        <text>D-ribulose 1,5-bisphosphate + O2 = 2-phosphoglycolate + (2R)-3-phosphoglycerate + 2 H(+)</text>
        <dbReference type="Rhea" id="RHEA:36631"/>
        <dbReference type="ChEBI" id="CHEBI:15378"/>
        <dbReference type="ChEBI" id="CHEBI:15379"/>
        <dbReference type="ChEBI" id="CHEBI:57870"/>
        <dbReference type="ChEBI" id="CHEBI:58033"/>
        <dbReference type="ChEBI" id="CHEBI:58272"/>
    </reaction>
</comment>
<comment type="cofactor">
    <cofactor evidence="1">
        <name>Mg(2+)</name>
        <dbReference type="ChEBI" id="CHEBI:18420"/>
    </cofactor>
    <text evidence="1">Binds 1 Mg(2+) ion per subunit.</text>
</comment>
<comment type="subunit">
    <text evidence="1">Heterohexadecamer of 8 large chains and 8 small chains; disulfide-linked. The disulfide link is formed within the large subunit homodimers (By similarity).</text>
</comment>
<comment type="subcellular location">
    <subcellularLocation>
        <location>Plastid</location>
    </subcellularLocation>
</comment>
<comment type="PTM">
    <text evidence="1">The disulfide bond which can form in the large chain dimeric partners within the hexadecamer appears to be associated with oxidative stress and protein turnover.</text>
</comment>
<comment type="miscellaneous">
    <text evidence="1">The basic functional RuBisCO is composed of a large chain homodimer in a 'head-to-tail' conformation. In form I RuBisCO this homodimer is arranged in a barrel-like tetramer with the small subunits forming a tetrameric 'cap' on each end of the 'barrel' (By similarity).</text>
</comment>
<comment type="similarity">
    <text evidence="2">Belongs to the RuBisCO large chain family. Type I subfamily.</text>
</comment>
<comment type="caution">
    <text evidence="2">This organism being non-photosynthetic, the role of this protein is uncertain.</text>
</comment>
<name>RBL_LATCL</name>
<feature type="propeptide" id="PRO_0000031275" evidence="1">
    <location>
        <begin position="1"/>
        <end position="2"/>
    </location>
</feature>
<feature type="chain" id="PRO_0000031276" description="Ribulose bisphosphate carboxylase large chain">
    <location>
        <begin position="3"/>
        <end position="477"/>
    </location>
</feature>
<feature type="active site" description="Proton acceptor" evidence="1">
    <location>
        <position position="175"/>
    </location>
</feature>
<feature type="active site" description="Proton acceptor" evidence="1">
    <location>
        <position position="294"/>
    </location>
</feature>
<feature type="binding site" description="in homodimeric partner" evidence="1">
    <location>
        <position position="123"/>
    </location>
    <ligand>
        <name>substrate</name>
    </ligand>
</feature>
<feature type="binding site" evidence="1">
    <location>
        <position position="173"/>
    </location>
    <ligand>
        <name>substrate</name>
    </ligand>
</feature>
<feature type="binding site" evidence="1">
    <location>
        <position position="177"/>
    </location>
    <ligand>
        <name>substrate</name>
    </ligand>
</feature>
<feature type="binding site" description="via carbamate group" evidence="1">
    <location>
        <position position="201"/>
    </location>
    <ligand>
        <name>Mg(2+)</name>
        <dbReference type="ChEBI" id="CHEBI:18420"/>
    </ligand>
</feature>
<feature type="binding site" evidence="1">
    <location>
        <position position="203"/>
    </location>
    <ligand>
        <name>Mg(2+)</name>
        <dbReference type="ChEBI" id="CHEBI:18420"/>
    </ligand>
</feature>
<feature type="binding site" evidence="1">
    <location>
        <position position="204"/>
    </location>
    <ligand>
        <name>Mg(2+)</name>
        <dbReference type="ChEBI" id="CHEBI:18420"/>
    </ligand>
</feature>
<feature type="binding site" evidence="1">
    <location>
        <position position="295"/>
    </location>
    <ligand>
        <name>substrate</name>
    </ligand>
</feature>
<feature type="binding site" evidence="1">
    <location>
        <position position="327"/>
    </location>
    <ligand>
        <name>substrate</name>
    </ligand>
</feature>
<feature type="binding site" evidence="1">
    <location>
        <position position="379"/>
    </location>
    <ligand>
        <name>substrate</name>
    </ligand>
</feature>
<feature type="site" description="Transition state stabilizer" evidence="1">
    <location>
        <position position="334"/>
    </location>
</feature>
<feature type="modified residue" description="N-acetylproline" evidence="1">
    <location>
        <position position="3"/>
    </location>
</feature>
<feature type="modified residue" description="N6,N6,N6-trimethyllysine" evidence="1">
    <location>
        <position position="14"/>
    </location>
</feature>
<feature type="modified residue" description="N6-carboxylysine" evidence="1">
    <location>
        <position position="201"/>
    </location>
</feature>
<feature type="disulfide bond" description="Interchain; in linked form" evidence="1">
    <location>
        <position position="247"/>
    </location>
</feature>
<proteinExistence type="inferred from homology"/>
<sequence>MSPQTETKASVGFKAGVKEYKLAYYTPEYETKDTDILAAFRVTPQPGVPPEEAGAAVAAESSTGTWTTVWTDGLTSLDRYKGRCYHIEPVPGETDQYICYVAYPLDLFEEGSVTNMFTSIVGNAFGFKALRALRLEDLRISPAYIKTFQGPPHGIQVERDKLNKYGRPLLGCTIKPKLGLSAKNYGRACYECLRGGLDFTKDDENVNSQPFMRWRDRFLFCAEAIYKSQAETGEIKGHYLNATAGTCEEMMKRAVFARELGVPIIMHDYLTGGFTANTSLAHYCRDNGLLLHIHRAMHAVIDRQKNHGIHFRVLAKALRMSGGDHIHSGTVVGKLEGERDITLGFVDLLRDDFIEKDRSRGIYFTQDWVSLPGVIPVASGGIHVWHMPALTEIFGDDSVLQFGGGTLGHPWGNAPGAVANRVALEACVKARNEGRDLAQEGNEIIHEACKWSPELAAACEVWREIVFNFAAVDVLDK</sequence>
<organism>
    <name type="scientific">Lathraea clandestina</name>
    <name type="common">Purple toothwort</name>
    <dbReference type="NCBI Taxonomy" id="41911"/>
    <lineage>
        <taxon>Eukaryota</taxon>
        <taxon>Viridiplantae</taxon>
        <taxon>Streptophyta</taxon>
        <taxon>Embryophyta</taxon>
        <taxon>Tracheophyta</taxon>
        <taxon>Spermatophyta</taxon>
        <taxon>Magnoliopsida</taxon>
        <taxon>eudicotyledons</taxon>
        <taxon>Gunneridae</taxon>
        <taxon>Pentapetalae</taxon>
        <taxon>asterids</taxon>
        <taxon>lamiids</taxon>
        <taxon>Lamiales</taxon>
        <taxon>Orobanchaceae</taxon>
        <taxon>Rhinantheae</taxon>
        <taxon>Lathraea</taxon>
    </lineage>
</organism>
<keyword id="KW-0007">Acetylation</keyword>
<keyword id="KW-0113">Calvin cycle</keyword>
<keyword id="KW-0120">Carbon dioxide fixation</keyword>
<keyword id="KW-1015">Disulfide bond</keyword>
<keyword id="KW-0456">Lyase</keyword>
<keyword id="KW-0460">Magnesium</keyword>
<keyword id="KW-0479">Metal-binding</keyword>
<keyword id="KW-0488">Methylation</keyword>
<keyword id="KW-0503">Monooxygenase</keyword>
<keyword id="KW-0560">Oxidoreductase</keyword>
<keyword id="KW-0601">Photorespiration</keyword>
<keyword id="KW-0934">Plastid</keyword>
<reference key="1">
    <citation type="journal article" date="1995" name="Plant Mol. Biol.">
        <title>Divergent evolution of two plastid genes, rbcL and atpB, in a non-photosynthetic parasitic plant.</title>
        <authorList>
            <person name="Delavault P.M."/>
            <person name="Sakanyan V."/>
            <person name="Thalouarn P."/>
        </authorList>
    </citation>
    <scope>NUCLEOTIDE SEQUENCE [GENOMIC DNA]</scope>
</reference>
<evidence type="ECO:0000250" key="1"/>
<evidence type="ECO:0000305" key="2"/>